<accession>Q8G6J7</accession>
<comment type="function">
    <text evidence="1">Could be involved in insertion of integral membrane proteins into the membrane.</text>
</comment>
<comment type="subcellular location">
    <subcellularLocation>
        <location evidence="1">Cell membrane</location>
        <topology evidence="1">Peripheral membrane protein</topology>
        <orientation evidence="1">Cytoplasmic side</orientation>
    </subcellularLocation>
</comment>
<comment type="similarity">
    <text evidence="1">Belongs to the UPF0161 family.</text>
</comment>
<name>YIDD_BIFLO</name>
<feature type="chain" id="PRO_0000171795" description="Putative membrane protein insertion efficiency factor">
    <location>
        <begin position="1"/>
        <end position="105"/>
    </location>
</feature>
<evidence type="ECO:0000255" key="1">
    <source>
        <dbReference type="HAMAP-Rule" id="MF_00386"/>
    </source>
</evidence>
<sequence>MTASFKAVMIGGVRWYQQHISANTPPCCKYYPTCSNYAIEALERYGAFKGGVLAVLRLLRCRPWSRGGIDDVPQRYSVFYRFSWSKAHEEPRLTPLATTQREAQR</sequence>
<protein>
    <recommendedName>
        <fullName evidence="1">Putative membrane protein insertion efficiency factor</fullName>
    </recommendedName>
</protein>
<gene>
    <name type="ordered locus">BL0643</name>
</gene>
<dbReference type="EMBL" id="AE014295">
    <property type="protein sequence ID" value="AAN24465.1"/>
    <property type="molecule type" value="Genomic_DNA"/>
</dbReference>
<dbReference type="RefSeq" id="NP_695829.1">
    <property type="nucleotide sequence ID" value="NC_004307.2"/>
</dbReference>
<dbReference type="STRING" id="206672.BL0643"/>
<dbReference type="EnsemblBacteria" id="AAN24465">
    <property type="protein sequence ID" value="AAN24465"/>
    <property type="gene ID" value="BL0643"/>
</dbReference>
<dbReference type="KEGG" id="blo:BL0643"/>
<dbReference type="PATRIC" id="fig|206672.9.peg.1374"/>
<dbReference type="HOGENOM" id="CLU_144811_5_3_11"/>
<dbReference type="OrthoDB" id="9801753at2"/>
<dbReference type="PhylomeDB" id="Q8G6J7"/>
<dbReference type="Proteomes" id="UP000000439">
    <property type="component" value="Chromosome"/>
</dbReference>
<dbReference type="GO" id="GO:0005886">
    <property type="term" value="C:plasma membrane"/>
    <property type="evidence" value="ECO:0007669"/>
    <property type="project" value="UniProtKB-SubCell"/>
</dbReference>
<dbReference type="HAMAP" id="MF_00386">
    <property type="entry name" value="UPF0161_YidD"/>
    <property type="match status" value="1"/>
</dbReference>
<dbReference type="InterPro" id="IPR002696">
    <property type="entry name" value="Membr_insert_effic_factor_YidD"/>
</dbReference>
<dbReference type="NCBIfam" id="TIGR00278">
    <property type="entry name" value="membrane protein insertion efficiency factor YidD"/>
    <property type="match status" value="1"/>
</dbReference>
<dbReference type="PANTHER" id="PTHR33383">
    <property type="entry name" value="MEMBRANE PROTEIN INSERTION EFFICIENCY FACTOR-RELATED"/>
    <property type="match status" value="1"/>
</dbReference>
<dbReference type="PANTHER" id="PTHR33383:SF1">
    <property type="entry name" value="MEMBRANE PROTEIN INSERTION EFFICIENCY FACTOR-RELATED"/>
    <property type="match status" value="1"/>
</dbReference>
<dbReference type="Pfam" id="PF01809">
    <property type="entry name" value="YidD"/>
    <property type="match status" value="1"/>
</dbReference>
<dbReference type="SMART" id="SM01234">
    <property type="entry name" value="Haemolytic"/>
    <property type="match status" value="1"/>
</dbReference>
<reference key="1">
    <citation type="journal article" date="2002" name="Proc. Natl. Acad. Sci. U.S.A.">
        <title>The genome sequence of Bifidobacterium longum reflects its adaptation to the human gastrointestinal tract.</title>
        <authorList>
            <person name="Schell M.A."/>
            <person name="Karmirantzou M."/>
            <person name="Snel B."/>
            <person name="Vilanova D."/>
            <person name="Berger B."/>
            <person name="Pessi G."/>
            <person name="Zwahlen M.-C."/>
            <person name="Desiere F."/>
            <person name="Bork P."/>
            <person name="Delley M."/>
            <person name="Pridmore R.D."/>
            <person name="Arigoni F."/>
        </authorList>
    </citation>
    <scope>NUCLEOTIDE SEQUENCE [LARGE SCALE GENOMIC DNA]</scope>
    <source>
        <strain>NCC 2705</strain>
    </source>
</reference>
<proteinExistence type="inferred from homology"/>
<organism>
    <name type="scientific">Bifidobacterium longum (strain NCC 2705)</name>
    <dbReference type="NCBI Taxonomy" id="206672"/>
    <lineage>
        <taxon>Bacteria</taxon>
        <taxon>Bacillati</taxon>
        <taxon>Actinomycetota</taxon>
        <taxon>Actinomycetes</taxon>
        <taxon>Bifidobacteriales</taxon>
        <taxon>Bifidobacteriaceae</taxon>
        <taxon>Bifidobacterium</taxon>
    </lineage>
</organism>
<keyword id="KW-1003">Cell membrane</keyword>
<keyword id="KW-0472">Membrane</keyword>
<keyword id="KW-1185">Reference proteome</keyword>